<keyword id="KW-1185">Reference proteome</keyword>
<reference key="1">
    <citation type="journal article" date="1997" name="Microbiology">
        <title>Analysis of the Bacillus subtilis genome: cloning and nucleotide sequence of a 62 kb region between 275 degrees (rrnB) and 284 degrees (pai).</title>
        <authorList>
            <person name="Oudega B."/>
            <person name="Koningstein G."/>
            <person name="Rodrigues L."/>
            <person name="de Sales Ramon M."/>
            <person name="Hilbert H."/>
            <person name="Duesterhoeft A."/>
            <person name="Pohl T.M."/>
            <person name="Weitzenegger T."/>
        </authorList>
    </citation>
    <scope>NUCLEOTIDE SEQUENCE [GENOMIC DNA]</scope>
    <source>
        <strain>168</strain>
    </source>
</reference>
<reference key="2">
    <citation type="journal article" date="1997" name="Nature">
        <title>The complete genome sequence of the Gram-positive bacterium Bacillus subtilis.</title>
        <authorList>
            <person name="Kunst F."/>
            <person name="Ogasawara N."/>
            <person name="Moszer I."/>
            <person name="Albertini A.M."/>
            <person name="Alloni G."/>
            <person name="Azevedo V."/>
            <person name="Bertero M.G."/>
            <person name="Bessieres P."/>
            <person name="Bolotin A."/>
            <person name="Borchert S."/>
            <person name="Borriss R."/>
            <person name="Boursier L."/>
            <person name="Brans A."/>
            <person name="Braun M."/>
            <person name="Brignell S.C."/>
            <person name="Bron S."/>
            <person name="Brouillet S."/>
            <person name="Bruschi C.V."/>
            <person name="Caldwell B."/>
            <person name="Capuano V."/>
            <person name="Carter N.M."/>
            <person name="Choi S.-K."/>
            <person name="Codani J.-J."/>
            <person name="Connerton I.F."/>
            <person name="Cummings N.J."/>
            <person name="Daniel R.A."/>
            <person name="Denizot F."/>
            <person name="Devine K.M."/>
            <person name="Duesterhoeft A."/>
            <person name="Ehrlich S.D."/>
            <person name="Emmerson P.T."/>
            <person name="Entian K.-D."/>
            <person name="Errington J."/>
            <person name="Fabret C."/>
            <person name="Ferrari E."/>
            <person name="Foulger D."/>
            <person name="Fritz C."/>
            <person name="Fujita M."/>
            <person name="Fujita Y."/>
            <person name="Fuma S."/>
            <person name="Galizzi A."/>
            <person name="Galleron N."/>
            <person name="Ghim S.-Y."/>
            <person name="Glaser P."/>
            <person name="Goffeau A."/>
            <person name="Golightly E.J."/>
            <person name="Grandi G."/>
            <person name="Guiseppi G."/>
            <person name="Guy B.J."/>
            <person name="Haga K."/>
            <person name="Haiech J."/>
            <person name="Harwood C.R."/>
            <person name="Henaut A."/>
            <person name="Hilbert H."/>
            <person name="Holsappel S."/>
            <person name="Hosono S."/>
            <person name="Hullo M.-F."/>
            <person name="Itaya M."/>
            <person name="Jones L.-M."/>
            <person name="Joris B."/>
            <person name="Karamata D."/>
            <person name="Kasahara Y."/>
            <person name="Klaerr-Blanchard M."/>
            <person name="Klein C."/>
            <person name="Kobayashi Y."/>
            <person name="Koetter P."/>
            <person name="Koningstein G."/>
            <person name="Krogh S."/>
            <person name="Kumano M."/>
            <person name="Kurita K."/>
            <person name="Lapidus A."/>
            <person name="Lardinois S."/>
            <person name="Lauber J."/>
            <person name="Lazarevic V."/>
            <person name="Lee S.-M."/>
            <person name="Levine A."/>
            <person name="Liu H."/>
            <person name="Masuda S."/>
            <person name="Mauel C."/>
            <person name="Medigue C."/>
            <person name="Medina N."/>
            <person name="Mellado R.P."/>
            <person name="Mizuno M."/>
            <person name="Moestl D."/>
            <person name="Nakai S."/>
            <person name="Noback M."/>
            <person name="Noone D."/>
            <person name="O'Reilly M."/>
            <person name="Ogawa K."/>
            <person name="Ogiwara A."/>
            <person name="Oudega B."/>
            <person name="Park S.-H."/>
            <person name="Parro V."/>
            <person name="Pohl T.M."/>
            <person name="Portetelle D."/>
            <person name="Porwollik S."/>
            <person name="Prescott A.M."/>
            <person name="Presecan E."/>
            <person name="Pujic P."/>
            <person name="Purnelle B."/>
            <person name="Rapoport G."/>
            <person name="Rey M."/>
            <person name="Reynolds S."/>
            <person name="Rieger M."/>
            <person name="Rivolta C."/>
            <person name="Rocha E."/>
            <person name="Roche B."/>
            <person name="Rose M."/>
            <person name="Sadaie Y."/>
            <person name="Sato T."/>
            <person name="Scanlan E."/>
            <person name="Schleich S."/>
            <person name="Schroeter R."/>
            <person name="Scoffone F."/>
            <person name="Sekiguchi J."/>
            <person name="Sekowska A."/>
            <person name="Seror S.J."/>
            <person name="Serror P."/>
            <person name="Shin B.-S."/>
            <person name="Soldo B."/>
            <person name="Sorokin A."/>
            <person name="Tacconi E."/>
            <person name="Takagi T."/>
            <person name="Takahashi H."/>
            <person name="Takemaru K."/>
            <person name="Takeuchi M."/>
            <person name="Tamakoshi A."/>
            <person name="Tanaka T."/>
            <person name="Terpstra P."/>
            <person name="Tognoni A."/>
            <person name="Tosato V."/>
            <person name="Uchiyama S."/>
            <person name="Vandenbol M."/>
            <person name="Vannier F."/>
            <person name="Vassarotti A."/>
            <person name="Viari A."/>
            <person name="Wambutt R."/>
            <person name="Wedler E."/>
            <person name="Wedler H."/>
            <person name="Weitzenegger T."/>
            <person name="Winters P."/>
            <person name="Wipat A."/>
            <person name="Yamamoto H."/>
            <person name="Yamane K."/>
            <person name="Yasumoto K."/>
            <person name="Yata K."/>
            <person name="Yoshida K."/>
            <person name="Yoshikawa H.-F."/>
            <person name="Zumstein E."/>
            <person name="Yoshikawa H."/>
            <person name="Danchin A."/>
        </authorList>
    </citation>
    <scope>NUCLEOTIDE SEQUENCE [LARGE SCALE GENOMIC DNA]</scope>
    <source>
        <strain>168</strain>
    </source>
</reference>
<comment type="similarity">
    <text evidence="1">Belongs to the UPF0047 family.</text>
</comment>
<comment type="sequence caution" evidence="1">
    <conflict type="erroneous initiation">
        <sequence resource="EMBL-CDS" id="CAB07927"/>
    </conflict>
</comment>
<accession>O05243</accession>
<sequence length="132" mass="15038">MLKTLQIKTTKRDEMIDITREVEAFLQETGITSGAALIYCPHTTAGITINENADPDVKKDMLRRFDEVYPWEHELDRHMEGNTAAHMKSSTVGASQHVIVENGRLILGTWQGIYFCEFDGPRTRTCYIKMMG</sequence>
<feature type="chain" id="PRO_0000088519" description="UPF0047 protein YugU">
    <location>
        <begin position="1"/>
        <end position="132"/>
    </location>
</feature>
<proteinExistence type="inferred from homology"/>
<protein>
    <recommendedName>
        <fullName>UPF0047 protein YugU</fullName>
    </recommendedName>
</protein>
<name>YUGU_BACSU</name>
<gene>
    <name type="primary">yugU</name>
    <name type="ordered locus">BSU31280</name>
</gene>
<dbReference type="EMBL" id="Z93935">
    <property type="protein sequence ID" value="CAB07927.1"/>
    <property type="status" value="ALT_INIT"/>
    <property type="molecule type" value="Genomic_DNA"/>
</dbReference>
<dbReference type="EMBL" id="AL009126">
    <property type="protein sequence ID" value="CAB15106.2"/>
    <property type="molecule type" value="Genomic_DNA"/>
</dbReference>
<dbReference type="PIR" id="A70012">
    <property type="entry name" value="A70012"/>
</dbReference>
<dbReference type="RefSeq" id="NP_391006.2">
    <property type="nucleotide sequence ID" value="NC_000964.3"/>
</dbReference>
<dbReference type="RefSeq" id="WP_003243483.1">
    <property type="nucleotide sequence ID" value="NZ_OZ025638.1"/>
</dbReference>
<dbReference type="SMR" id="O05243"/>
<dbReference type="FunCoup" id="O05243">
    <property type="interactions" value="349"/>
</dbReference>
<dbReference type="STRING" id="224308.BSU31280"/>
<dbReference type="PaxDb" id="224308-BSU31280"/>
<dbReference type="EnsemblBacteria" id="CAB15106">
    <property type="protein sequence ID" value="CAB15106"/>
    <property type="gene ID" value="BSU_31280"/>
</dbReference>
<dbReference type="GeneID" id="937156"/>
<dbReference type="KEGG" id="bsu:BSU31280"/>
<dbReference type="PATRIC" id="fig|224308.179.peg.3390"/>
<dbReference type="eggNOG" id="COG0432">
    <property type="taxonomic scope" value="Bacteria"/>
</dbReference>
<dbReference type="InParanoid" id="O05243"/>
<dbReference type="OrthoDB" id="9801725at2"/>
<dbReference type="PhylomeDB" id="O05243"/>
<dbReference type="BioCyc" id="BSUB:BSU31280-MONOMER"/>
<dbReference type="Proteomes" id="UP000001570">
    <property type="component" value="Chromosome"/>
</dbReference>
<dbReference type="Gene3D" id="2.60.120.460">
    <property type="entry name" value="YjbQ-like"/>
    <property type="match status" value="1"/>
</dbReference>
<dbReference type="InterPro" id="IPR001602">
    <property type="entry name" value="UPF0047_YjbQ-like"/>
</dbReference>
<dbReference type="InterPro" id="IPR035917">
    <property type="entry name" value="YjbQ-like_sf"/>
</dbReference>
<dbReference type="NCBIfam" id="TIGR00149">
    <property type="entry name" value="TIGR00149_YjbQ"/>
    <property type="match status" value="1"/>
</dbReference>
<dbReference type="PANTHER" id="PTHR30615">
    <property type="entry name" value="UNCHARACTERIZED PROTEIN YJBQ-RELATED"/>
    <property type="match status" value="1"/>
</dbReference>
<dbReference type="PANTHER" id="PTHR30615:SF8">
    <property type="entry name" value="UPF0047 PROTEIN C4A8.02C"/>
    <property type="match status" value="1"/>
</dbReference>
<dbReference type="Pfam" id="PF01894">
    <property type="entry name" value="UPF0047"/>
    <property type="match status" value="1"/>
</dbReference>
<dbReference type="PIRSF" id="PIRSF004681">
    <property type="entry name" value="UCP004681"/>
    <property type="match status" value="1"/>
</dbReference>
<dbReference type="SUPFAM" id="SSF111038">
    <property type="entry name" value="YjbQ-like"/>
    <property type="match status" value="1"/>
</dbReference>
<dbReference type="PROSITE" id="PS01314">
    <property type="entry name" value="UPF0047"/>
    <property type="match status" value="1"/>
</dbReference>
<organism>
    <name type="scientific">Bacillus subtilis (strain 168)</name>
    <dbReference type="NCBI Taxonomy" id="224308"/>
    <lineage>
        <taxon>Bacteria</taxon>
        <taxon>Bacillati</taxon>
        <taxon>Bacillota</taxon>
        <taxon>Bacilli</taxon>
        <taxon>Bacillales</taxon>
        <taxon>Bacillaceae</taxon>
        <taxon>Bacillus</taxon>
    </lineage>
</organism>
<evidence type="ECO:0000305" key="1"/>